<feature type="chain" id="PRO_0000333384" description="Transcription activator MSS11">
    <location>
        <begin position="1"/>
        <end position="792"/>
    </location>
</feature>
<feature type="domain" description="LisH" evidence="2">
    <location>
        <begin position="53"/>
        <end position="85"/>
    </location>
</feature>
<feature type="region of interest" description="Disordered" evidence="3">
    <location>
        <begin position="1"/>
        <end position="34"/>
    </location>
</feature>
<feature type="region of interest" description="Disordered" evidence="3">
    <location>
        <begin position="197"/>
        <end position="377"/>
    </location>
</feature>
<feature type="region of interest" description="Disordered" evidence="3">
    <location>
        <begin position="397"/>
        <end position="477"/>
    </location>
</feature>
<feature type="region of interest" description="Disordered" evidence="3">
    <location>
        <begin position="624"/>
        <end position="707"/>
    </location>
</feature>
<feature type="region of interest" description="Disordered" evidence="3">
    <location>
        <begin position="734"/>
        <end position="792"/>
    </location>
</feature>
<feature type="compositionally biased region" description="Polar residues" evidence="3">
    <location>
        <begin position="1"/>
        <end position="16"/>
    </location>
</feature>
<feature type="compositionally biased region" description="Polar residues" evidence="3">
    <location>
        <begin position="197"/>
        <end position="233"/>
    </location>
</feature>
<feature type="compositionally biased region" description="Low complexity" evidence="3">
    <location>
        <begin position="285"/>
        <end position="294"/>
    </location>
</feature>
<feature type="compositionally biased region" description="Basic residues" evidence="3">
    <location>
        <begin position="311"/>
        <end position="325"/>
    </location>
</feature>
<feature type="compositionally biased region" description="Polar residues" evidence="3">
    <location>
        <begin position="355"/>
        <end position="377"/>
    </location>
</feature>
<feature type="compositionally biased region" description="Polar residues" evidence="3">
    <location>
        <begin position="397"/>
        <end position="424"/>
    </location>
</feature>
<feature type="compositionally biased region" description="Basic and acidic residues" evidence="3">
    <location>
        <begin position="428"/>
        <end position="437"/>
    </location>
</feature>
<feature type="compositionally biased region" description="Polar residues" evidence="3">
    <location>
        <begin position="444"/>
        <end position="458"/>
    </location>
</feature>
<feature type="compositionally biased region" description="Polar residues" evidence="3">
    <location>
        <begin position="468"/>
        <end position="477"/>
    </location>
</feature>
<feature type="compositionally biased region" description="Polar residues" evidence="3">
    <location>
        <begin position="646"/>
        <end position="707"/>
    </location>
</feature>
<feature type="compositionally biased region" description="Polar residues" evidence="3">
    <location>
        <begin position="743"/>
        <end position="767"/>
    </location>
</feature>
<feature type="compositionally biased region" description="Polar residues" evidence="3">
    <location>
        <begin position="774"/>
        <end position="783"/>
    </location>
</feature>
<accession>Q6FTZ3</accession>
<protein>
    <recommendedName>
        <fullName>Transcription activator MSS11</fullName>
    </recommendedName>
</protein>
<reference key="1">
    <citation type="journal article" date="2004" name="Nature">
        <title>Genome evolution in yeasts.</title>
        <authorList>
            <person name="Dujon B."/>
            <person name="Sherman D."/>
            <person name="Fischer G."/>
            <person name="Durrens P."/>
            <person name="Casaregola S."/>
            <person name="Lafontaine I."/>
            <person name="de Montigny J."/>
            <person name="Marck C."/>
            <person name="Neuveglise C."/>
            <person name="Talla E."/>
            <person name="Goffard N."/>
            <person name="Frangeul L."/>
            <person name="Aigle M."/>
            <person name="Anthouard V."/>
            <person name="Babour A."/>
            <person name="Barbe V."/>
            <person name="Barnay S."/>
            <person name="Blanchin S."/>
            <person name="Beckerich J.-M."/>
            <person name="Beyne E."/>
            <person name="Bleykasten C."/>
            <person name="Boisrame A."/>
            <person name="Boyer J."/>
            <person name="Cattolico L."/>
            <person name="Confanioleri F."/>
            <person name="de Daruvar A."/>
            <person name="Despons L."/>
            <person name="Fabre E."/>
            <person name="Fairhead C."/>
            <person name="Ferry-Dumazet H."/>
            <person name="Groppi A."/>
            <person name="Hantraye F."/>
            <person name="Hennequin C."/>
            <person name="Jauniaux N."/>
            <person name="Joyet P."/>
            <person name="Kachouri R."/>
            <person name="Kerrest A."/>
            <person name="Koszul R."/>
            <person name="Lemaire M."/>
            <person name="Lesur I."/>
            <person name="Ma L."/>
            <person name="Muller H."/>
            <person name="Nicaud J.-M."/>
            <person name="Nikolski M."/>
            <person name="Oztas S."/>
            <person name="Ozier-Kalogeropoulos O."/>
            <person name="Pellenz S."/>
            <person name="Potier S."/>
            <person name="Richard G.-F."/>
            <person name="Straub M.-L."/>
            <person name="Suleau A."/>
            <person name="Swennen D."/>
            <person name="Tekaia F."/>
            <person name="Wesolowski-Louvel M."/>
            <person name="Westhof E."/>
            <person name="Wirth B."/>
            <person name="Zeniou-Meyer M."/>
            <person name="Zivanovic Y."/>
            <person name="Bolotin-Fukuhara M."/>
            <person name="Thierry A."/>
            <person name="Bouchier C."/>
            <person name="Caudron B."/>
            <person name="Scarpelli C."/>
            <person name="Gaillardin C."/>
            <person name="Weissenbach J."/>
            <person name="Wincker P."/>
            <person name="Souciet J.-L."/>
        </authorList>
    </citation>
    <scope>NUCLEOTIDE SEQUENCE [LARGE SCALE GENOMIC DNA]</scope>
    <source>
        <strain>ATCC 2001 / BCRC 20586 / JCM 3761 / NBRC 0622 / NRRL Y-65 / CBS 138</strain>
    </source>
</reference>
<organism>
    <name type="scientific">Candida glabrata (strain ATCC 2001 / BCRC 20586 / JCM 3761 / NBRC 0622 / NRRL Y-65 / CBS 138)</name>
    <name type="common">Yeast</name>
    <name type="synonym">Nakaseomyces glabratus</name>
    <dbReference type="NCBI Taxonomy" id="284593"/>
    <lineage>
        <taxon>Eukaryota</taxon>
        <taxon>Fungi</taxon>
        <taxon>Dikarya</taxon>
        <taxon>Ascomycota</taxon>
        <taxon>Saccharomycotina</taxon>
        <taxon>Saccharomycetes</taxon>
        <taxon>Saccharomycetales</taxon>
        <taxon>Saccharomycetaceae</taxon>
        <taxon>Nakaseomyces</taxon>
    </lineage>
</organism>
<proteinExistence type="inferred from homology"/>
<keyword id="KW-0010">Activator</keyword>
<keyword id="KW-0963">Cytoplasm</keyword>
<keyword id="KW-0539">Nucleus</keyword>
<keyword id="KW-1185">Reference proteome</keyword>
<keyword id="KW-0804">Transcription</keyword>
<keyword id="KW-0805">Transcription regulation</keyword>
<evidence type="ECO:0000250" key="1"/>
<evidence type="ECO:0000255" key="2">
    <source>
        <dbReference type="PROSITE-ProRule" id="PRU00126"/>
    </source>
</evidence>
<evidence type="ECO:0000256" key="3">
    <source>
        <dbReference type="SAM" id="MobiDB-lite"/>
    </source>
</evidence>
<evidence type="ECO:0000305" key="4"/>
<comment type="function">
    <text evidence="1">Transcription factor that regulates pseudohyphal differentiation, invasive growth, floculation, adhesion and starch metabolism in response to nutrient availability.</text>
</comment>
<comment type="subcellular location">
    <subcellularLocation>
        <location evidence="1">Cytoplasm</location>
    </subcellularLocation>
    <subcellularLocation>
        <location evidence="1">Nucleus</location>
    </subcellularLocation>
</comment>
<comment type="similarity">
    <text evidence="4">Belongs to the MSS11 family.</text>
</comment>
<sequence>MSSSSIHTTEGSTPNTAGGMGKEPYSNVSGSQRSSDTLKQQKFIVSDAMAKNSRQLLFAHIYNYLVHNKFYSTASQFLKEVEVPLTTIENIGKIKENTVRDDSSQMRYDDIPENLLRPDMLLNASDTFLVEWWEIFRTLFDHVDGIPNESLDSNGNQEVFKQRIMAILPHNNPTVPPPFINGAENLVDPERHMNIARGSSVSQPSGVLRSPTQNELLNNSQDQRPPQFRSKSMMNGMPPGLSSMSTPNGVEGMQGNFERPTFQQSKSAALPTQRKSSIEEQANRNSSNFSGFGSQSPKNVNEDNEIDSKSAKGKLRSKSSKRGKVGKAAGTPKYNEVDEKHSTMQGSPFSPELLGSNNPVLQNQSKPSAQSQMNGSQWDPNFLMQQQRNPQQWQKLNGNNMQQDIPNSSHPSIGSNNPSNTSHRFNSRRKEQYDSKPEAIGNGSHRSSTSPSAGSVGNMSADYGDQNEYGSNKSSNFSGAFTNNNAMFQEMAKTMNLMMNQKSEEMNQWNKSNPYNMRPDNMPMSTMNWNNFPMPKGTSNSFNKDMLQAMQNKMMQSQSSSGMDPNLQQQYLMMMNMLMNFQSGNGFQSNPTNVYKSRGNDLDFAQPFSSENNLANDQSNIRSSYEAYQEDSKTPSTENGGRKMNMTPSLQSTNMISNGQMKHSTSRFSPTHGAPNQSELNKMESTQRGNDISHNYNPPNNRFVGNNLKSQNFSLASQDESVIAAAKKGRRKLTKLNKRNLATPESTSNTNYPESNKNGISTPNGSVGNKGKQTDINGHSNYPDNPFELFNI</sequence>
<gene>
    <name type="primary">MSS11</name>
    <name type="ordered locus">CAGL0F07667g</name>
</gene>
<dbReference type="EMBL" id="CR380952">
    <property type="protein sequence ID" value="CAG59225.1"/>
    <property type="molecule type" value="Genomic_DNA"/>
</dbReference>
<dbReference type="RefSeq" id="XP_446301.1">
    <property type="nucleotide sequence ID" value="XM_446301.1"/>
</dbReference>
<dbReference type="SMR" id="Q6FTZ3"/>
<dbReference type="STRING" id="284593.Q6FTZ3"/>
<dbReference type="GeneID" id="2887601"/>
<dbReference type="KEGG" id="cgr:2887601"/>
<dbReference type="eggNOG" id="ENOG502S549">
    <property type="taxonomic scope" value="Eukaryota"/>
</dbReference>
<dbReference type="HOGENOM" id="CLU_354493_0_0_1"/>
<dbReference type="InParanoid" id="Q6FTZ3"/>
<dbReference type="Proteomes" id="UP000002428">
    <property type="component" value="Chromosome F"/>
</dbReference>
<dbReference type="GO" id="GO:0005737">
    <property type="term" value="C:cytoplasm"/>
    <property type="evidence" value="ECO:0007669"/>
    <property type="project" value="UniProtKB-SubCell"/>
</dbReference>
<dbReference type="GO" id="GO:0005634">
    <property type="term" value="C:nucleus"/>
    <property type="evidence" value="ECO:0007669"/>
    <property type="project" value="UniProtKB-SubCell"/>
</dbReference>
<dbReference type="GO" id="GO:0009889">
    <property type="term" value="P:regulation of biosynthetic process"/>
    <property type="evidence" value="ECO:0007669"/>
    <property type="project" value="UniProtKB-ARBA"/>
</dbReference>
<dbReference type="InterPro" id="IPR006594">
    <property type="entry name" value="LisH"/>
</dbReference>
<dbReference type="Pfam" id="PF08513">
    <property type="entry name" value="LisH"/>
    <property type="match status" value="1"/>
</dbReference>
<dbReference type="SMART" id="SM00667">
    <property type="entry name" value="LisH"/>
    <property type="match status" value="1"/>
</dbReference>
<dbReference type="PROSITE" id="PS50896">
    <property type="entry name" value="LISH"/>
    <property type="match status" value="1"/>
</dbReference>
<name>MSS11_CANGA</name>